<sequence>MSFTDDHDHAACQRPLERVRPFDAAAFERAVADMLTASGIAIDPIHTGKTAQRVRELWQKRLLDGYDTVPAEALGSGFADERRDMVVIRSLAVHGMCPHHLLPFRGVAHVAYLPGGRLHGFGRIARMVDAISHRYTYQEWITHEIARTLVEHGEARGAACLIEAEQLCLLMGENRRGDERVITQCYAGDFETDAEARNQFLRAIER</sequence>
<evidence type="ECO:0000250" key="1"/>
<evidence type="ECO:0000255" key="2">
    <source>
        <dbReference type="HAMAP-Rule" id="MF_00223"/>
    </source>
</evidence>
<proteinExistence type="inferred from homology"/>
<name>GCH1_CHRVO</name>
<dbReference type="EC" id="3.5.4.16" evidence="2"/>
<dbReference type="EMBL" id="AE016825">
    <property type="protein sequence ID" value="AAQ58805.1"/>
    <property type="molecule type" value="Genomic_DNA"/>
</dbReference>
<dbReference type="RefSeq" id="WP_011134685.1">
    <property type="nucleotide sequence ID" value="NC_005085.1"/>
</dbReference>
<dbReference type="SMR" id="Q7NYZ2"/>
<dbReference type="STRING" id="243365.CV_1130"/>
<dbReference type="GeneID" id="66366831"/>
<dbReference type="KEGG" id="cvi:CV_1130"/>
<dbReference type="eggNOG" id="COG0302">
    <property type="taxonomic scope" value="Bacteria"/>
</dbReference>
<dbReference type="HOGENOM" id="CLU_049768_3_3_4"/>
<dbReference type="OrthoDB" id="9801207at2"/>
<dbReference type="UniPathway" id="UPA00848">
    <property type="reaction ID" value="UER00151"/>
</dbReference>
<dbReference type="Proteomes" id="UP000001424">
    <property type="component" value="Chromosome"/>
</dbReference>
<dbReference type="GO" id="GO:0005737">
    <property type="term" value="C:cytoplasm"/>
    <property type="evidence" value="ECO:0007669"/>
    <property type="project" value="TreeGrafter"/>
</dbReference>
<dbReference type="GO" id="GO:0005525">
    <property type="term" value="F:GTP binding"/>
    <property type="evidence" value="ECO:0007669"/>
    <property type="project" value="UniProtKB-KW"/>
</dbReference>
<dbReference type="GO" id="GO:0003934">
    <property type="term" value="F:GTP cyclohydrolase I activity"/>
    <property type="evidence" value="ECO:0007669"/>
    <property type="project" value="UniProtKB-UniRule"/>
</dbReference>
<dbReference type="GO" id="GO:0008270">
    <property type="term" value="F:zinc ion binding"/>
    <property type="evidence" value="ECO:0007669"/>
    <property type="project" value="UniProtKB-UniRule"/>
</dbReference>
<dbReference type="GO" id="GO:0006730">
    <property type="term" value="P:one-carbon metabolic process"/>
    <property type="evidence" value="ECO:0007669"/>
    <property type="project" value="UniProtKB-UniRule"/>
</dbReference>
<dbReference type="GO" id="GO:0006729">
    <property type="term" value="P:tetrahydrobiopterin biosynthetic process"/>
    <property type="evidence" value="ECO:0007669"/>
    <property type="project" value="TreeGrafter"/>
</dbReference>
<dbReference type="GO" id="GO:0046654">
    <property type="term" value="P:tetrahydrofolate biosynthetic process"/>
    <property type="evidence" value="ECO:0007669"/>
    <property type="project" value="UniProtKB-UniRule"/>
</dbReference>
<dbReference type="Gene3D" id="3.30.1130.10">
    <property type="match status" value="1"/>
</dbReference>
<dbReference type="HAMAP" id="MF_00223">
    <property type="entry name" value="FolE"/>
    <property type="match status" value="1"/>
</dbReference>
<dbReference type="InterPro" id="IPR043133">
    <property type="entry name" value="GTP-CH-I_C/QueF"/>
</dbReference>
<dbReference type="InterPro" id="IPR001474">
    <property type="entry name" value="GTP_CycHdrlase_I"/>
</dbReference>
<dbReference type="InterPro" id="IPR018234">
    <property type="entry name" value="GTP_CycHdrlase_I_CS"/>
</dbReference>
<dbReference type="InterPro" id="IPR020602">
    <property type="entry name" value="GTP_CycHdrlase_I_dom"/>
</dbReference>
<dbReference type="NCBIfam" id="NF006825">
    <property type="entry name" value="PRK09347.1-2"/>
    <property type="match status" value="1"/>
</dbReference>
<dbReference type="NCBIfam" id="NF006826">
    <property type="entry name" value="PRK09347.1-3"/>
    <property type="match status" value="1"/>
</dbReference>
<dbReference type="PANTHER" id="PTHR11109:SF7">
    <property type="entry name" value="GTP CYCLOHYDROLASE 1"/>
    <property type="match status" value="1"/>
</dbReference>
<dbReference type="PANTHER" id="PTHR11109">
    <property type="entry name" value="GTP CYCLOHYDROLASE I"/>
    <property type="match status" value="1"/>
</dbReference>
<dbReference type="Pfam" id="PF01227">
    <property type="entry name" value="GTP_cyclohydroI"/>
    <property type="match status" value="1"/>
</dbReference>
<dbReference type="SUPFAM" id="SSF55620">
    <property type="entry name" value="Tetrahydrobiopterin biosynthesis enzymes-like"/>
    <property type="match status" value="1"/>
</dbReference>
<dbReference type="PROSITE" id="PS00859">
    <property type="entry name" value="GTP_CYCLOHYDROL_1_1"/>
    <property type="match status" value="1"/>
</dbReference>
<comment type="catalytic activity">
    <reaction evidence="2">
        <text>GTP + H2O = 7,8-dihydroneopterin 3'-triphosphate + formate + H(+)</text>
        <dbReference type="Rhea" id="RHEA:17473"/>
        <dbReference type="ChEBI" id="CHEBI:15377"/>
        <dbReference type="ChEBI" id="CHEBI:15378"/>
        <dbReference type="ChEBI" id="CHEBI:15740"/>
        <dbReference type="ChEBI" id="CHEBI:37565"/>
        <dbReference type="ChEBI" id="CHEBI:58462"/>
        <dbReference type="EC" id="3.5.4.16"/>
    </reaction>
</comment>
<comment type="pathway">
    <text evidence="2">Cofactor biosynthesis; 7,8-dihydroneopterin triphosphate biosynthesis; 7,8-dihydroneopterin triphosphate from GTP: step 1/1.</text>
</comment>
<comment type="subunit">
    <text evidence="1">Toroid-shaped homodecamer, composed of two pentamers of five dimers.</text>
</comment>
<comment type="similarity">
    <text evidence="2">Belongs to the GTP cyclohydrolase I family.</text>
</comment>
<keyword id="KW-0342">GTP-binding</keyword>
<keyword id="KW-0378">Hydrolase</keyword>
<keyword id="KW-0479">Metal-binding</keyword>
<keyword id="KW-0547">Nucleotide-binding</keyword>
<keyword id="KW-0554">One-carbon metabolism</keyword>
<keyword id="KW-1185">Reference proteome</keyword>
<keyword id="KW-0862">Zinc</keyword>
<protein>
    <recommendedName>
        <fullName evidence="2">GTP cyclohydrolase 1</fullName>
        <ecNumber evidence="2">3.5.4.16</ecNumber>
    </recommendedName>
    <alternativeName>
        <fullName evidence="2">GTP cyclohydrolase I</fullName>
        <shortName evidence="2">GTP-CH-I</shortName>
    </alternativeName>
</protein>
<gene>
    <name evidence="2" type="primary">folE</name>
    <name type="ordered locus">CV_1130</name>
</gene>
<organism>
    <name type="scientific">Chromobacterium violaceum (strain ATCC 12472 / DSM 30191 / JCM 1249 / CCUG 213 / NBRC 12614 / NCIMB 9131 / NCTC 9757 / MK)</name>
    <dbReference type="NCBI Taxonomy" id="243365"/>
    <lineage>
        <taxon>Bacteria</taxon>
        <taxon>Pseudomonadati</taxon>
        <taxon>Pseudomonadota</taxon>
        <taxon>Betaproteobacteria</taxon>
        <taxon>Neisseriales</taxon>
        <taxon>Chromobacteriaceae</taxon>
        <taxon>Chromobacterium</taxon>
    </lineage>
</organism>
<accession>Q7NYZ2</accession>
<reference key="1">
    <citation type="journal article" date="2003" name="Proc. Natl. Acad. Sci. U.S.A.">
        <title>The complete genome sequence of Chromobacterium violaceum reveals remarkable and exploitable bacterial adaptability.</title>
        <authorList>
            <person name="Vasconcelos A.T.R."/>
            <person name="de Almeida D.F."/>
            <person name="Hungria M."/>
            <person name="Guimaraes C.T."/>
            <person name="Antonio R.V."/>
            <person name="Almeida F.C."/>
            <person name="de Almeida L.G.P."/>
            <person name="de Almeida R."/>
            <person name="Alves-Gomes J.A."/>
            <person name="Andrade E.M."/>
            <person name="Araripe J."/>
            <person name="de Araujo M.F.F."/>
            <person name="Astolfi-Filho S."/>
            <person name="Azevedo V."/>
            <person name="Baptista A.J."/>
            <person name="Bataus L.A.M."/>
            <person name="Batista J.S."/>
            <person name="Belo A."/>
            <person name="van den Berg C."/>
            <person name="Bogo M."/>
            <person name="Bonatto S."/>
            <person name="Bordignon J."/>
            <person name="Brigido M.M."/>
            <person name="Brito C.A."/>
            <person name="Brocchi M."/>
            <person name="Burity H.A."/>
            <person name="Camargo A.A."/>
            <person name="Cardoso D.D.P."/>
            <person name="Carneiro N.P."/>
            <person name="Carraro D.M."/>
            <person name="Carvalho C.M.B."/>
            <person name="Cascardo J.C.M."/>
            <person name="Cavada B.S."/>
            <person name="Chueire L.M.O."/>
            <person name="Creczynski-Pasa T.B."/>
            <person name="Cunha-Junior N.C."/>
            <person name="Fagundes N."/>
            <person name="Falcao C.L."/>
            <person name="Fantinatti F."/>
            <person name="Farias I.P."/>
            <person name="Felipe M.S.S."/>
            <person name="Ferrari L.P."/>
            <person name="Ferro J.A."/>
            <person name="Ferro M.I.T."/>
            <person name="Franco G.R."/>
            <person name="Freitas N.S.A."/>
            <person name="Furlan L.R."/>
            <person name="Gazzinelli R.T."/>
            <person name="Gomes E.A."/>
            <person name="Goncalves P.R."/>
            <person name="Grangeiro T.B."/>
            <person name="Grattapaglia D."/>
            <person name="Grisard E.C."/>
            <person name="Hanna E.S."/>
            <person name="Jardim S.N."/>
            <person name="Laurino J."/>
            <person name="Leoi L.C.T."/>
            <person name="Lima L.F.A."/>
            <person name="Loureiro M.F."/>
            <person name="Lyra M.C.C.P."/>
            <person name="Madeira H.M.F."/>
            <person name="Manfio G.P."/>
            <person name="Maranhao A.Q."/>
            <person name="Martins W.S."/>
            <person name="di Mauro S.M.Z."/>
            <person name="de Medeiros S.R.B."/>
            <person name="Meissner R.V."/>
            <person name="Moreira M.A.M."/>
            <person name="Nascimento F.F."/>
            <person name="Nicolas M.F."/>
            <person name="Oliveira J.G."/>
            <person name="Oliveira S.C."/>
            <person name="Paixao R.F.C."/>
            <person name="Parente J.A."/>
            <person name="Pedrosa F.O."/>
            <person name="Pena S.D.J."/>
            <person name="Pereira J.O."/>
            <person name="Pereira M."/>
            <person name="Pinto L.S.R.C."/>
            <person name="Pinto L.S."/>
            <person name="Porto J.I.R."/>
            <person name="Potrich D.P."/>
            <person name="Ramalho-Neto C.E."/>
            <person name="Reis A.M.M."/>
            <person name="Rigo L.U."/>
            <person name="Rondinelli E."/>
            <person name="Santos E.B.P."/>
            <person name="Santos F.R."/>
            <person name="Schneider M.P.C."/>
            <person name="Seuanez H.N."/>
            <person name="Silva A.M.R."/>
            <person name="da Silva A.L.C."/>
            <person name="Silva D.W."/>
            <person name="Silva R."/>
            <person name="Simoes I.C."/>
            <person name="Simon D."/>
            <person name="Soares C.M.A."/>
            <person name="Soares R.B.A."/>
            <person name="Souza E.M."/>
            <person name="Souza K.R.L."/>
            <person name="Souza R.C."/>
            <person name="Steffens M.B.R."/>
            <person name="Steindel M."/>
            <person name="Teixeira S.R."/>
            <person name="Urmenyi T."/>
            <person name="Vettore A."/>
            <person name="Wassem R."/>
            <person name="Zaha A."/>
            <person name="Simpson A.J.G."/>
        </authorList>
    </citation>
    <scope>NUCLEOTIDE SEQUENCE [LARGE SCALE GENOMIC DNA]</scope>
    <source>
        <strain>ATCC 12472 / DSM 30191 / JCM 1249 / CCUG 213 / NBRC 12614 / NCIMB 9131 / NCTC 9757 / MK</strain>
    </source>
</reference>
<feature type="chain" id="PRO_0000119397" description="GTP cyclohydrolase 1">
    <location>
        <begin position="1"/>
        <end position="206"/>
    </location>
</feature>
<feature type="binding site" evidence="2">
    <location>
        <position position="97"/>
    </location>
    <ligand>
        <name>Zn(2+)</name>
        <dbReference type="ChEBI" id="CHEBI:29105"/>
    </ligand>
</feature>
<feature type="binding site" evidence="2">
    <location>
        <position position="100"/>
    </location>
    <ligand>
        <name>Zn(2+)</name>
        <dbReference type="ChEBI" id="CHEBI:29105"/>
    </ligand>
</feature>
<feature type="binding site" evidence="2">
    <location>
        <position position="168"/>
    </location>
    <ligand>
        <name>Zn(2+)</name>
        <dbReference type="ChEBI" id="CHEBI:29105"/>
    </ligand>
</feature>